<reference key="1">
    <citation type="journal article" date="2002" name="Mol. Cell. Biochem.">
        <title>Purification and characterization of a potent hemolytic toxin with phospholipase A2 activity from the venom of Indian Russell's viper.</title>
        <authorList>
            <person name="Chakraborty A.K."/>
            <person name="Hall R.H."/>
            <person name="Ghose A.C."/>
        </authorList>
    </citation>
    <scope>PROTEIN SEQUENCE</scope>
    <scope>FUNCTION</scope>
    <scope>TOXIC DOSE</scope>
    <source>
        <strain>Eastern India</strain>
        <tissue>Venom</tissue>
    </source>
</reference>
<protein>
    <recommendedName>
        <fullName>Neutral phospholipase A2 RVV-PFIIc'</fullName>
        <shortName>svPLA2</shortName>
        <ecNumber>3.1.1.4</ecNumber>
    </recommendedName>
    <alternativeName>
        <fullName>Phosphatidylcholine 2-acylhydrolase</fullName>
    </alternativeName>
</protein>
<keyword id="KW-1203">Blood coagulation cascade inhibiting toxin</keyword>
<keyword id="KW-0106">Calcium</keyword>
<keyword id="KW-0204">Cytolysis</keyword>
<keyword id="KW-0903">Direct protein sequencing</keyword>
<keyword id="KW-1015">Disulfide bond</keyword>
<keyword id="KW-0354">Hemolysis</keyword>
<keyword id="KW-1199">Hemostasis impairing toxin</keyword>
<keyword id="KW-0378">Hydrolase</keyword>
<keyword id="KW-0442">Lipid degradation</keyword>
<keyword id="KW-0443">Lipid metabolism</keyword>
<keyword id="KW-0479">Metal-binding</keyword>
<keyword id="KW-0964">Secreted</keyword>
<keyword id="KW-0800">Toxin</keyword>
<accession>P0DKX1</accession>
<sequence length="19" mass="2194">NLFQFAEMIVKMTGKEAVH</sequence>
<feature type="chain" id="PRO_0000421163" description="Neutral phospholipase A2 RVV-PFIIc'">
    <location>
        <begin position="1"/>
        <end position="19" status="greater than"/>
    </location>
</feature>
<feature type="non-terminal residue">
    <location>
        <position position="19"/>
    </location>
</feature>
<organism>
    <name type="scientific">Daboia russelii</name>
    <name type="common">Russel's viper</name>
    <name type="synonym">Vipera russelii</name>
    <dbReference type="NCBI Taxonomy" id="8707"/>
    <lineage>
        <taxon>Eukaryota</taxon>
        <taxon>Metazoa</taxon>
        <taxon>Chordata</taxon>
        <taxon>Craniata</taxon>
        <taxon>Vertebrata</taxon>
        <taxon>Euteleostomi</taxon>
        <taxon>Lepidosauria</taxon>
        <taxon>Squamata</taxon>
        <taxon>Bifurcata</taxon>
        <taxon>Unidentata</taxon>
        <taxon>Episquamata</taxon>
        <taxon>Toxicofera</taxon>
        <taxon>Serpentes</taxon>
        <taxon>Colubroidea</taxon>
        <taxon>Viperidae</taxon>
        <taxon>Viperinae</taxon>
        <taxon>Daboia</taxon>
    </lineage>
</organism>
<comment type="function">
    <text evidence="2">Snake venom phospholipase A2 (PLA2) that shows enzymatic, indirect hemolytic and anticoagulant activities. Interestingly, anti-PFIIc'serum completely inhibits anticoagulant activity, partially inhibits the indirect hemolytic activity, but does not inhibit enzymatic activity. PLA2 catalyzes the calcium-dependent hydrolysis of the 2-acyl groups in 3-sn-phosphoglycerides.</text>
</comment>
<comment type="catalytic activity">
    <reaction>
        <text>a 1,2-diacyl-sn-glycero-3-phosphocholine + H2O = a 1-acyl-sn-glycero-3-phosphocholine + a fatty acid + H(+)</text>
        <dbReference type="Rhea" id="RHEA:15801"/>
        <dbReference type="ChEBI" id="CHEBI:15377"/>
        <dbReference type="ChEBI" id="CHEBI:15378"/>
        <dbReference type="ChEBI" id="CHEBI:28868"/>
        <dbReference type="ChEBI" id="CHEBI:57643"/>
        <dbReference type="ChEBI" id="CHEBI:58168"/>
        <dbReference type="EC" id="3.1.1.4"/>
    </reaction>
</comment>
<comment type="cofactor">
    <cofactor evidence="1">
        <name>Ca(2+)</name>
        <dbReference type="ChEBI" id="CHEBI:29108"/>
    </cofactor>
    <text evidence="1">Binds 1 Ca(2+) ion.</text>
</comment>
<comment type="subcellular location">
    <subcellularLocation>
        <location>Secreted</location>
    </subcellularLocation>
</comment>
<comment type="tissue specificity">
    <text>Expressed by the venom gland.</text>
</comment>
<comment type="PTM">
    <text evidence="1">Contains 7 disulfide bonds.</text>
</comment>
<comment type="toxic dose">
    <text evidence="2">LD(50) is 0.1 mg/kg by intraperitoneal injection.</text>
</comment>
<comment type="miscellaneous">
    <text evidence="4">This phospholipase A2 is distinct from phospholipases of Russel's viper venom reported from other parts of India.</text>
</comment>
<comment type="similarity">
    <text evidence="3">Belongs to the phospholipase A2 family. Group II subfamily.</text>
</comment>
<name>PA2N_DABRR</name>
<evidence type="ECO:0000250" key="1"/>
<evidence type="ECO:0000269" key="2">
    <source>
    </source>
</evidence>
<evidence type="ECO:0000305" key="3"/>
<evidence type="ECO:0000305" key="4">
    <source>
    </source>
</evidence>
<proteinExistence type="evidence at protein level"/>
<dbReference type="EC" id="3.1.1.4"/>
<dbReference type="GO" id="GO:0005576">
    <property type="term" value="C:extracellular region"/>
    <property type="evidence" value="ECO:0007669"/>
    <property type="project" value="UniProtKB-SubCell"/>
</dbReference>
<dbReference type="GO" id="GO:0046872">
    <property type="term" value="F:metal ion binding"/>
    <property type="evidence" value="ECO:0007669"/>
    <property type="project" value="UniProtKB-KW"/>
</dbReference>
<dbReference type="GO" id="GO:0004623">
    <property type="term" value="F:phospholipase A2 activity"/>
    <property type="evidence" value="ECO:0007669"/>
    <property type="project" value="UniProtKB-EC"/>
</dbReference>
<dbReference type="GO" id="GO:0090729">
    <property type="term" value="F:toxin activity"/>
    <property type="evidence" value="ECO:0007669"/>
    <property type="project" value="UniProtKB-KW"/>
</dbReference>
<dbReference type="GO" id="GO:0031640">
    <property type="term" value="P:killing of cells of another organism"/>
    <property type="evidence" value="ECO:0007669"/>
    <property type="project" value="UniProtKB-KW"/>
</dbReference>
<dbReference type="GO" id="GO:0016042">
    <property type="term" value="P:lipid catabolic process"/>
    <property type="evidence" value="ECO:0007669"/>
    <property type="project" value="UniProtKB-KW"/>
</dbReference>